<evidence type="ECO:0000255" key="1">
    <source>
        <dbReference type="HAMAP-Rule" id="MF_00451"/>
    </source>
</evidence>
<name>NDK_STAAE</name>
<reference key="1">
    <citation type="journal article" date="2008" name="J. Bacteriol.">
        <title>Genome sequence of Staphylococcus aureus strain Newman and comparative analysis of staphylococcal genomes: polymorphism and evolution of two major pathogenicity islands.</title>
        <authorList>
            <person name="Baba T."/>
            <person name="Bae T."/>
            <person name="Schneewind O."/>
            <person name="Takeuchi F."/>
            <person name="Hiramatsu K."/>
        </authorList>
    </citation>
    <scope>NUCLEOTIDE SEQUENCE [LARGE SCALE GENOMIC DNA]</scope>
    <source>
        <strain>Newman</strain>
    </source>
</reference>
<gene>
    <name evidence="1" type="primary">ndk</name>
    <name type="ordered locus">NWMN_1378</name>
</gene>
<organism>
    <name type="scientific">Staphylococcus aureus (strain Newman)</name>
    <dbReference type="NCBI Taxonomy" id="426430"/>
    <lineage>
        <taxon>Bacteria</taxon>
        <taxon>Bacillati</taxon>
        <taxon>Bacillota</taxon>
        <taxon>Bacilli</taxon>
        <taxon>Bacillales</taxon>
        <taxon>Staphylococcaceae</taxon>
        <taxon>Staphylococcus</taxon>
    </lineage>
</organism>
<keyword id="KW-0067">ATP-binding</keyword>
<keyword id="KW-0963">Cytoplasm</keyword>
<keyword id="KW-0418">Kinase</keyword>
<keyword id="KW-0460">Magnesium</keyword>
<keyword id="KW-0479">Metal-binding</keyword>
<keyword id="KW-0546">Nucleotide metabolism</keyword>
<keyword id="KW-0547">Nucleotide-binding</keyword>
<keyword id="KW-0597">Phosphoprotein</keyword>
<keyword id="KW-0808">Transferase</keyword>
<comment type="function">
    <text evidence="1">Major role in the synthesis of nucleoside triphosphates other than ATP. The ATP gamma phosphate is transferred to the NDP beta phosphate via a ping-pong mechanism, using a phosphorylated active-site intermediate.</text>
</comment>
<comment type="catalytic activity">
    <reaction evidence="1">
        <text>a 2'-deoxyribonucleoside 5'-diphosphate + ATP = a 2'-deoxyribonucleoside 5'-triphosphate + ADP</text>
        <dbReference type="Rhea" id="RHEA:44640"/>
        <dbReference type="ChEBI" id="CHEBI:30616"/>
        <dbReference type="ChEBI" id="CHEBI:61560"/>
        <dbReference type="ChEBI" id="CHEBI:73316"/>
        <dbReference type="ChEBI" id="CHEBI:456216"/>
        <dbReference type="EC" id="2.7.4.6"/>
    </reaction>
</comment>
<comment type="catalytic activity">
    <reaction evidence="1">
        <text>a ribonucleoside 5'-diphosphate + ATP = a ribonucleoside 5'-triphosphate + ADP</text>
        <dbReference type="Rhea" id="RHEA:18113"/>
        <dbReference type="ChEBI" id="CHEBI:30616"/>
        <dbReference type="ChEBI" id="CHEBI:57930"/>
        <dbReference type="ChEBI" id="CHEBI:61557"/>
        <dbReference type="ChEBI" id="CHEBI:456216"/>
        <dbReference type="EC" id="2.7.4.6"/>
    </reaction>
</comment>
<comment type="cofactor">
    <cofactor evidence="1">
        <name>Mg(2+)</name>
        <dbReference type="ChEBI" id="CHEBI:18420"/>
    </cofactor>
</comment>
<comment type="subunit">
    <text evidence="1">Homotetramer.</text>
</comment>
<comment type="subcellular location">
    <subcellularLocation>
        <location evidence="1">Cytoplasm</location>
    </subcellularLocation>
</comment>
<comment type="similarity">
    <text evidence="1">Belongs to the NDK family.</text>
</comment>
<protein>
    <recommendedName>
        <fullName evidence="1">Nucleoside diphosphate kinase</fullName>
        <shortName evidence="1">NDK</shortName>
        <shortName evidence="1">NDP kinase</shortName>
        <ecNumber evidence="1">2.7.4.6</ecNumber>
    </recommendedName>
    <alternativeName>
        <fullName evidence="1">Nucleoside-2-P kinase</fullName>
    </alternativeName>
</protein>
<accession>A6QH18</accession>
<dbReference type="EC" id="2.7.4.6" evidence="1"/>
<dbReference type="EMBL" id="AP009351">
    <property type="protein sequence ID" value="BAF67650.1"/>
    <property type="molecule type" value="Genomic_DNA"/>
</dbReference>
<dbReference type="RefSeq" id="WP_000442480.1">
    <property type="nucleotide sequence ID" value="NZ_JBBIAE010000001.1"/>
</dbReference>
<dbReference type="SMR" id="A6QH18"/>
<dbReference type="GeneID" id="66839658"/>
<dbReference type="KEGG" id="sae:NWMN_1378"/>
<dbReference type="HOGENOM" id="CLU_060216_6_3_9"/>
<dbReference type="Proteomes" id="UP000006386">
    <property type="component" value="Chromosome"/>
</dbReference>
<dbReference type="GO" id="GO:0005737">
    <property type="term" value="C:cytoplasm"/>
    <property type="evidence" value="ECO:0007669"/>
    <property type="project" value="UniProtKB-SubCell"/>
</dbReference>
<dbReference type="GO" id="GO:0005524">
    <property type="term" value="F:ATP binding"/>
    <property type="evidence" value="ECO:0007669"/>
    <property type="project" value="UniProtKB-UniRule"/>
</dbReference>
<dbReference type="GO" id="GO:0046872">
    <property type="term" value="F:metal ion binding"/>
    <property type="evidence" value="ECO:0007669"/>
    <property type="project" value="UniProtKB-KW"/>
</dbReference>
<dbReference type="GO" id="GO:0004550">
    <property type="term" value="F:nucleoside diphosphate kinase activity"/>
    <property type="evidence" value="ECO:0007669"/>
    <property type="project" value="UniProtKB-UniRule"/>
</dbReference>
<dbReference type="GO" id="GO:0006241">
    <property type="term" value="P:CTP biosynthetic process"/>
    <property type="evidence" value="ECO:0007669"/>
    <property type="project" value="UniProtKB-UniRule"/>
</dbReference>
<dbReference type="GO" id="GO:0006183">
    <property type="term" value="P:GTP biosynthetic process"/>
    <property type="evidence" value="ECO:0007669"/>
    <property type="project" value="UniProtKB-UniRule"/>
</dbReference>
<dbReference type="GO" id="GO:0006228">
    <property type="term" value="P:UTP biosynthetic process"/>
    <property type="evidence" value="ECO:0007669"/>
    <property type="project" value="UniProtKB-UniRule"/>
</dbReference>
<dbReference type="CDD" id="cd04413">
    <property type="entry name" value="NDPk_I"/>
    <property type="match status" value="1"/>
</dbReference>
<dbReference type="FunFam" id="3.30.70.141:FF:000002">
    <property type="entry name" value="Nucleoside diphosphate kinase"/>
    <property type="match status" value="1"/>
</dbReference>
<dbReference type="Gene3D" id="3.30.70.141">
    <property type="entry name" value="Nucleoside diphosphate kinase-like domain"/>
    <property type="match status" value="1"/>
</dbReference>
<dbReference type="HAMAP" id="MF_00451">
    <property type="entry name" value="NDP_kinase"/>
    <property type="match status" value="1"/>
</dbReference>
<dbReference type="InterPro" id="IPR034907">
    <property type="entry name" value="NDK-like_dom"/>
</dbReference>
<dbReference type="InterPro" id="IPR036850">
    <property type="entry name" value="NDK-like_dom_sf"/>
</dbReference>
<dbReference type="InterPro" id="IPR001564">
    <property type="entry name" value="Nucleoside_diP_kinase"/>
</dbReference>
<dbReference type="InterPro" id="IPR023005">
    <property type="entry name" value="Nucleoside_diP_kinase_AS"/>
</dbReference>
<dbReference type="NCBIfam" id="NF001908">
    <property type="entry name" value="PRK00668.1"/>
    <property type="match status" value="1"/>
</dbReference>
<dbReference type="PANTHER" id="PTHR11349">
    <property type="entry name" value="NUCLEOSIDE DIPHOSPHATE KINASE"/>
    <property type="match status" value="1"/>
</dbReference>
<dbReference type="Pfam" id="PF00334">
    <property type="entry name" value="NDK"/>
    <property type="match status" value="1"/>
</dbReference>
<dbReference type="PRINTS" id="PR01243">
    <property type="entry name" value="NUCDPKINASE"/>
</dbReference>
<dbReference type="SMART" id="SM00562">
    <property type="entry name" value="NDK"/>
    <property type="match status" value="1"/>
</dbReference>
<dbReference type="SUPFAM" id="SSF54919">
    <property type="entry name" value="Nucleoside diphosphate kinase, NDK"/>
    <property type="match status" value="1"/>
</dbReference>
<dbReference type="PROSITE" id="PS00469">
    <property type="entry name" value="NDPK"/>
    <property type="match status" value="1"/>
</dbReference>
<dbReference type="PROSITE" id="PS51374">
    <property type="entry name" value="NDPK_LIKE"/>
    <property type="match status" value="1"/>
</dbReference>
<sequence length="149" mass="16575">MERTFLMIKPDAVQRNLIGEVISRIERKGLKLVGGKLMQVPMELAETHYGEHQGKPFYNDLISFITSAPVFAMVVEGEDAVNVSRHIIGSTNPSEASPGSIRGDLGLTVGRNIIHGSDSLESAEREINLWFNENEITSYASPRDAWLYE</sequence>
<feature type="chain" id="PRO_1000072367" description="Nucleoside diphosphate kinase">
    <location>
        <begin position="1"/>
        <end position="149"/>
    </location>
</feature>
<feature type="active site" description="Pros-phosphohistidine intermediate" evidence="1">
    <location>
        <position position="115"/>
    </location>
</feature>
<feature type="binding site" evidence="1">
    <location>
        <position position="9"/>
    </location>
    <ligand>
        <name>ATP</name>
        <dbReference type="ChEBI" id="CHEBI:30616"/>
    </ligand>
</feature>
<feature type="binding site" evidence="1">
    <location>
        <position position="57"/>
    </location>
    <ligand>
        <name>ATP</name>
        <dbReference type="ChEBI" id="CHEBI:30616"/>
    </ligand>
</feature>
<feature type="binding site" evidence="1">
    <location>
        <position position="85"/>
    </location>
    <ligand>
        <name>ATP</name>
        <dbReference type="ChEBI" id="CHEBI:30616"/>
    </ligand>
</feature>
<feature type="binding site" evidence="1">
    <location>
        <position position="91"/>
    </location>
    <ligand>
        <name>ATP</name>
        <dbReference type="ChEBI" id="CHEBI:30616"/>
    </ligand>
</feature>
<feature type="binding site" evidence="1">
    <location>
        <position position="102"/>
    </location>
    <ligand>
        <name>ATP</name>
        <dbReference type="ChEBI" id="CHEBI:30616"/>
    </ligand>
</feature>
<feature type="binding site" evidence="1">
    <location>
        <position position="112"/>
    </location>
    <ligand>
        <name>ATP</name>
        <dbReference type="ChEBI" id="CHEBI:30616"/>
    </ligand>
</feature>
<proteinExistence type="inferred from homology"/>